<gene>
    <name type="primary">mt-co2</name>
    <name type="synonym">coii</name>
    <name type="synonym">coxii</name>
    <name type="synonym">mtco2</name>
</gene>
<feature type="chain" id="PRO_0000183667" description="Cytochrome c oxidase subunit 2">
    <location>
        <begin position="1"/>
        <end position="48" status="greater than"/>
    </location>
</feature>
<feature type="topological domain" description="Mitochondrial intermembrane" evidence="3">
    <location>
        <begin position="1"/>
        <end position="14"/>
    </location>
</feature>
<feature type="transmembrane region" description="Helical; Name=I" evidence="3">
    <location>
        <begin position="15"/>
        <end position="45"/>
    </location>
</feature>
<feature type="topological domain" description="Mitochondrial matrix" evidence="3">
    <location>
        <begin position="46"/>
        <end position="48" status="greater than"/>
    </location>
</feature>
<feature type="non-terminal residue">
    <location>
        <position position="48"/>
    </location>
</feature>
<protein>
    <recommendedName>
        <fullName>Cytochrome c oxidase subunit 2</fullName>
        <ecNumber>7.1.1.9</ecNumber>
    </recommendedName>
    <alternativeName>
        <fullName>Cytochrome c oxidase polypeptide II</fullName>
    </alternativeName>
</protein>
<sequence length="48" mass="5292">MAHPAQLGLQDASSPIXEELLHFHEDALMIVFLISTLVLYIITTTVST</sequence>
<dbReference type="EC" id="7.1.1.9"/>
<dbReference type="EMBL" id="M64912">
    <property type="protein sequence ID" value="AAB01476.1"/>
    <property type="status" value="ALT_SEQ"/>
    <property type="molecule type" value="Genomic_DNA"/>
</dbReference>
<dbReference type="PIR" id="T09945">
    <property type="entry name" value="T09945"/>
</dbReference>
<dbReference type="GO" id="GO:0005743">
    <property type="term" value="C:mitochondrial inner membrane"/>
    <property type="evidence" value="ECO:0007669"/>
    <property type="project" value="UniProtKB-SubCell"/>
</dbReference>
<dbReference type="GO" id="GO:0045277">
    <property type="term" value="C:respiratory chain complex IV"/>
    <property type="evidence" value="ECO:0000250"/>
    <property type="project" value="UniProtKB"/>
</dbReference>
<dbReference type="GO" id="GO:0004129">
    <property type="term" value="F:cytochrome-c oxidase activity"/>
    <property type="evidence" value="ECO:0007669"/>
    <property type="project" value="UniProtKB-EC"/>
</dbReference>
<dbReference type="GO" id="GO:0022900">
    <property type="term" value="P:electron transport chain"/>
    <property type="evidence" value="ECO:0007669"/>
    <property type="project" value="InterPro"/>
</dbReference>
<dbReference type="Gene3D" id="1.10.287.90">
    <property type="match status" value="1"/>
</dbReference>
<dbReference type="InterPro" id="IPR011759">
    <property type="entry name" value="Cyt_c_oxidase_su2_TM_dom"/>
</dbReference>
<dbReference type="InterPro" id="IPR036257">
    <property type="entry name" value="Cyt_c_oxidase_su2_TM_sf"/>
</dbReference>
<dbReference type="Pfam" id="PF02790">
    <property type="entry name" value="COX2_TM"/>
    <property type="match status" value="1"/>
</dbReference>
<dbReference type="SUPFAM" id="SSF81464">
    <property type="entry name" value="Cytochrome c oxidase subunit II-like, transmembrane region"/>
    <property type="match status" value="1"/>
</dbReference>
<dbReference type="PROSITE" id="PS50999">
    <property type="entry name" value="COX2_TM"/>
    <property type="match status" value="1"/>
</dbReference>
<name>COX2_POLSX</name>
<keyword id="KW-0186">Copper</keyword>
<keyword id="KW-0249">Electron transport</keyword>
<keyword id="KW-0472">Membrane</keyword>
<keyword id="KW-0496">Mitochondrion</keyword>
<keyword id="KW-0999">Mitochondrion inner membrane</keyword>
<keyword id="KW-0679">Respiratory chain</keyword>
<keyword id="KW-1278">Translocase</keyword>
<keyword id="KW-0812">Transmembrane</keyword>
<keyword id="KW-1133">Transmembrane helix</keyword>
<keyword id="KW-0813">Transport</keyword>
<geneLocation type="mitochondrion"/>
<comment type="function">
    <text evidence="2">Component of the cytochrome c oxidase, the last enzyme in the mitochondrial electron transport chain which drives oxidative phosphorylation. The respiratory chain contains 3 multisubunit complexes succinate dehydrogenase (complex II, CII), ubiquinol-cytochrome c oxidoreductase (cytochrome b-c1 complex, complex III, CIII) and cytochrome c oxidase (complex IV, CIV), that cooperate to transfer electrons derived from NADH and succinate to molecular oxygen, creating an electrochemical gradient over the inner membrane that drives transmembrane transport and the ATP synthase. Cytochrome c oxidase is the component of the respiratory chain that catalyzes the reduction of oxygen to water. Electrons originating from reduced cytochrome c in the intermembrane space (IMS) are transferred via the dinuclear copper A center (CU(A)) of subunit 2 and heme A of subunit 1 to the active site in subunit 1, a binuclear center (BNC) formed by heme A3 and copper B (CU(B)). The BNC reduces molecular oxygen to 2 water molecules using 4 electrons from cytochrome c in the IMS and 4 protons from the mitochondrial matrix.</text>
</comment>
<comment type="catalytic activity">
    <reaction evidence="2">
        <text>4 Fe(II)-[cytochrome c] + O2 + 8 H(+)(in) = 4 Fe(III)-[cytochrome c] + 2 H2O + 4 H(+)(out)</text>
        <dbReference type="Rhea" id="RHEA:11436"/>
        <dbReference type="Rhea" id="RHEA-COMP:10350"/>
        <dbReference type="Rhea" id="RHEA-COMP:14399"/>
        <dbReference type="ChEBI" id="CHEBI:15377"/>
        <dbReference type="ChEBI" id="CHEBI:15378"/>
        <dbReference type="ChEBI" id="CHEBI:15379"/>
        <dbReference type="ChEBI" id="CHEBI:29033"/>
        <dbReference type="ChEBI" id="CHEBI:29034"/>
        <dbReference type="EC" id="7.1.1.9"/>
    </reaction>
    <physiologicalReaction direction="left-to-right" evidence="2">
        <dbReference type="Rhea" id="RHEA:11437"/>
    </physiologicalReaction>
</comment>
<comment type="cofactor">
    <cofactor evidence="3">
        <name>Cu cation</name>
        <dbReference type="ChEBI" id="CHEBI:23378"/>
    </cofactor>
    <text evidence="3">Binds a dinuclear copper A center per subunit.</text>
</comment>
<comment type="subunit">
    <text evidence="1 3">Component of the cytochrome c oxidase (complex IV, CIV), a multisubunit enzyme composed of 14 subunits. The complex is composed of a catalytic core of 3 subunits MT-CO1, MT-CO2 and MT-CO3, encoded in the mitochondrial DNA, and 11 supernumerary subunits COX4I, COX5A, COX5B, COX6A, COX6B, COX6C, COX7A, COX7B, COX7C, COX8 and NDUFA4, which are encoded in the nuclear genome. The complex exists as a monomer or a dimer and forms supercomplexes (SCs) in the inner mitochondrial membrane with NADH-ubiquinone oxidoreductase (complex I, CI) and ubiquinol-cytochrome c oxidoreductase (cytochrome b-c1 complex, complex III, CIII), resulting in different assemblies (supercomplex SCI(1)III(2)IV(1) and megacomplex MCI(2)III(2)IV(2)) (By similarity). Found in a complex with TMEM177, COA6, COX18, COX20, SCO1 and SCO2. Interacts with TMEM177 in a COX20-dependent manner. Interacts with COX20. Interacts with COX16 (By similarity).</text>
</comment>
<comment type="subcellular location">
    <subcellularLocation>
        <location evidence="3">Mitochondrion inner membrane</location>
        <topology evidence="3">Multi-pass membrane protein</topology>
    </subcellularLocation>
</comment>
<comment type="similarity">
    <text evidence="4">Belongs to the cytochrome c oxidase subunit 2 family.</text>
</comment>
<accession>P29661</accession>
<reference key="1">
    <citation type="journal article" date="1991" name="Mol. Biol. Evol.">
        <title>Phylogenetic relationships of neopterygian fishes, inferred from mitochondrial DNA sequences.</title>
        <authorList>
            <person name="Normark B.B."/>
            <person name="McCune A.R."/>
            <person name="Harrison R.G."/>
        </authorList>
    </citation>
    <scope>NUCLEOTIDE SEQUENCE [GENOMIC DNA]</scope>
</reference>
<proteinExistence type="inferred from homology"/>
<evidence type="ECO:0000250" key="1">
    <source>
        <dbReference type="UniProtKB" id="P00403"/>
    </source>
</evidence>
<evidence type="ECO:0000250" key="2">
    <source>
        <dbReference type="UniProtKB" id="P00410"/>
    </source>
</evidence>
<evidence type="ECO:0000250" key="3">
    <source>
        <dbReference type="UniProtKB" id="P68530"/>
    </source>
</evidence>
<evidence type="ECO:0000305" key="4"/>
<organism>
    <name type="scientific">Polypterus sp.</name>
    <name type="common">Bichir</name>
    <dbReference type="NCBI Taxonomy" id="8291"/>
    <lineage>
        <taxon>Eukaryota</taxon>
        <taxon>Metazoa</taxon>
        <taxon>Chordata</taxon>
        <taxon>Craniata</taxon>
        <taxon>Vertebrata</taxon>
        <taxon>Euteleostomi</taxon>
        <taxon>Actinopterygii</taxon>
        <taxon>Polypteriformes</taxon>
        <taxon>Polypteridae</taxon>
        <taxon>Polypterus</taxon>
    </lineage>
</organism>